<keyword id="KW-0134">Cell wall</keyword>
<keyword id="KW-1015">Disulfide bond</keyword>
<keyword id="KW-0325">Glycoprotein</keyword>
<keyword id="KW-1185">Reference proteome</keyword>
<keyword id="KW-0964">Secreted</keyword>
<keyword id="KW-0732">Signal</keyword>
<organism>
    <name type="scientific">Pleurotus ostreatus (strain PC15)</name>
    <name type="common">Oyster mushroom</name>
    <dbReference type="NCBI Taxonomy" id="1137138"/>
    <lineage>
        <taxon>Eukaryota</taxon>
        <taxon>Fungi</taxon>
        <taxon>Dikarya</taxon>
        <taxon>Basidiomycota</taxon>
        <taxon>Agaricomycotina</taxon>
        <taxon>Agaricomycetes</taxon>
        <taxon>Agaricomycetidae</taxon>
        <taxon>Agaricales</taxon>
        <taxon>Pleurotineae</taxon>
        <taxon>Pleurotaceae</taxon>
        <taxon>Pleurotus</taxon>
    </lineage>
</organism>
<gene>
    <name evidence="4" type="primary">Hydph18</name>
    <name type="ORF">PLEOSDRAFT_31875</name>
</gene>
<protein>
    <recommendedName>
        <fullName evidence="4">Class I hydrophobin 18</fullName>
    </recommendedName>
</protein>
<comment type="function">
    <text evidence="5">Aerial growth, conidiation, and dispersal of filamentous fungi in the environment rely upon a capability of their secreting small amphipathic proteins called hydrophobins (HPBs) with low sequence identity. Class I can self-assemble into an outermost layer of rodlet bundles on aerial cell surfaces, conferring cellular hydrophobicity that supports fungal growth, development and dispersal; whereas Class II form highly ordered films at water-air interfaces through intermolecular interactions but contribute nothing to the rodlet structure.</text>
</comment>
<comment type="subunit">
    <text evidence="1">Self-assembles to form functional amyloid fibrils called rodlets. Self-assembly into fibrillar rodlets occurs spontaneously at hydrophobic:hydrophilic interfaces and the rodlets further associate laterally to form amphipathic monolayers.</text>
</comment>
<comment type="subcellular location">
    <subcellularLocation>
        <location evidence="6">Secreted</location>
    </subcellularLocation>
    <subcellularLocation>
        <location evidence="6">Secreted</location>
        <location evidence="6">Cell wall</location>
    </subcellularLocation>
</comment>
<comment type="similarity">
    <text evidence="5">Belongs to the fungal hydrophobin family.</text>
</comment>
<dbReference type="EMBL" id="KL198010">
    <property type="protein sequence ID" value="KDQ26264.1"/>
    <property type="molecule type" value="Genomic_DNA"/>
</dbReference>
<dbReference type="STRING" id="1137138.A0A067NEJ5"/>
<dbReference type="VEuPathDB" id="FungiDB:PLEOSDRAFT_31875"/>
<dbReference type="HOGENOM" id="CLU_105134_2_0_1"/>
<dbReference type="InParanoid" id="A0A067NEJ5"/>
<dbReference type="OrthoDB" id="138913at5338"/>
<dbReference type="Proteomes" id="UP000027073">
    <property type="component" value="Unassembled WGS sequence"/>
</dbReference>
<dbReference type="GO" id="GO:0005576">
    <property type="term" value="C:extracellular region"/>
    <property type="evidence" value="ECO:0007669"/>
    <property type="project" value="UniProtKB-KW"/>
</dbReference>
<dbReference type="GO" id="GO:0009277">
    <property type="term" value="C:fungal-type cell wall"/>
    <property type="evidence" value="ECO:0007669"/>
    <property type="project" value="InterPro"/>
</dbReference>
<dbReference type="GO" id="GO:0005199">
    <property type="term" value="F:structural constituent of cell wall"/>
    <property type="evidence" value="ECO:0007669"/>
    <property type="project" value="InterPro"/>
</dbReference>
<dbReference type="CDD" id="cd23507">
    <property type="entry name" value="hydrophobin_I"/>
    <property type="match status" value="1"/>
</dbReference>
<dbReference type="InterPro" id="IPR001338">
    <property type="entry name" value="Hydrophobin"/>
</dbReference>
<dbReference type="Pfam" id="PF01185">
    <property type="entry name" value="Hydrophobin"/>
    <property type="match status" value="1"/>
</dbReference>
<dbReference type="SMART" id="SM00075">
    <property type="entry name" value="HYDRO"/>
    <property type="match status" value="1"/>
</dbReference>
<proteinExistence type="inferred from homology"/>
<reference key="1">
    <citation type="journal article" date="2014" name="Proc. Natl. Acad. Sci. U.S.A.">
        <title>Extensive sampling of basidiomycete genomes demonstrates inadequacy of the white-rot/brown-rot paradigm for wood decay fungi.</title>
        <authorList>
            <person name="Riley R."/>
            <person name="Salamov A.A."/>
            <person name="Brown D.W."/>
            <person name="Nagy L.G."/>
            <person name="Floudas D."/>
            <person name="Held B.W."/>
            <person name="Levasseur A."/>
            <person name="Lombard V."/>
            <person name="Morin E."/>
            <person name="Otillar R."/>
            <person name="Lindquist E.A."/>
            <person name="Sun H."/>
            <person name="LaButti K.M."/>
            <person name="Schmutz J."/>
            <person name="Jabbour D."/>
            <person name="Luo H."/>
            <person name="Baker S.E."/>
            <person name="Pisabarro A.G."/>
            <person name="Walton J.D."/>
            <person name="Blanchette R.A."/>
            <person name="Henrissat B."/>
            <person name="Martin F."/>
            <person name="Cullen D."/>
            <person name="Hibbett D.S."/>
            <person name="Grigoriev I.V."/>
        </authorList>
    </citation>
    <scope>NUCLEOTIDE SEQUENCE [LARGE SCALE GENOMIC DNA]</scope>
    <source>
        <strain>PC15</strain>
    </source>
</reference>
<reference key="2">
    <citation type="journal article" date="2021" name="Microbiol. Res.">
        <title>Identification of hydrophobin genes and their physiological functions related to growth and development in Pleurotus ostreatus.</title>
        <authorList>
            <person name="Xu D."/>
            <person name="Wang Y."/>
            <person name="Keerio A.A."/>
            <person name="Ma A."/>
        </authorList>
    </citation>
    <scope>IDENTIFICATION</scope>
</reference>
<name>HYD18_PLEO1</name>
<evidence type="ECO:0000250" key="1">
    <source>
        <dbReference type="UniProtKB" id="Q04571"/>
    </source>
</evidence>
<evidence type="ECO:0000255" key="2"/>
<evidence type="ECO:0000255" key="3">
    <source>
        <dbReference type="PROSITE-ProRule" id="PRU00498"/>
    </source>
</evidence>
<evidence type="ECO:0000303" key="4">
    <source>
    </source>
</evidence>
<evidence type="ECO:0000305" key="5"/>
<evidence type="ECO:0000305" key="6">
    <source>
    </source>
</evidence>
<accession>A0A067NEJ5</accession>
<feature type="signal peptide" evidence="2">
    <location>
        <begin position="1"/>
        <end position="20"/>
    </location>
</feature>
<feature type="chain" id="PRO_5013986734" description="Class I hydrophobin 18">
    <location>
        <begin position="21"/>
        <end position="109"/>
    </location>
</feature>
<feature type="glycosylation site" description="N-linked (GlcNAc...) asparagine" evidence="3">
    <location>
        <position position="91"/>
    </location>
</feature>
<feature type="glycosylation site" description="N-linked (GlcNAc...) asparagine" evidence="3">
    <location>
        <position position="106"/>
    </location>
</feature>
<feature type="disulfide bond" evidence="1">
    <location>
        <begin position="28"/>
        <end position="88"/>
    </location>
</feature>
<feature type="disulfide bond" evidence="1">
    <location>
        <begin position="35"/>
        <end position="82"/>
    </location>
</feature>
<feature type="disulfide bond" evidence="1">
    <location>
        <begin position="36"/>
        <end position="69"/>
    </location>
</feature>
<feature type="disulfide bond" evidence="1">
    <location>
        <begin position="89"/>
        <end position="102"/>
    </location>
</feature>
<sequence>MFTEQVLNVIILLQTATVTATAIPASGCNAGDVQCCKSVQKADSAGGAALLGLVGIVLSNLDVFIGGDCSPITAIGVGGTSCSSQAVCCENNSFNGLIALGCVPINLSL</sequence>